<proteinExistence type="inferred from homology"/>
<comment type="cofactor">
    <cofactor evidence="1">
        <name>Fe(2+)</name>
        <dbReference type="ChEBI" id="CHEBI:29033"/>
    </cofactor>
    <text evidence="1">Binds 1 Fe(2+) ion per subunit.</text>
</comment>
<comment type="cofactor">
    <cofactor evidence="1">
        <name>L-ascorbate</name>
        <dbReference type="ChEBI" id="CHEBI:38290"/>
    </cofactor>
</comment>
<dbReference type="EC" id="1.14.11.-" evidence="1"/>
<dbReference type="EMBL" id="AM889285">
    <property type="protein sequence ID" value="CAP55181.1"/>
    <property type="molecule type" value="Genomic_DNA"/>
</dbReference>
<dbReference type="EMBL" id="CP001189">
    <property type="protein sequence ID" value="ACI51709.1"/>
    <property type="molecule type" value="Genomic_DNA"/>
</dbReference>
<dbReference type="RefSeq" id="WP_012224388.1">
    <property type="nucleotide sequence ID" value="NC_010125.1"/>
</dbReference>
<dbReference type="SMR" id="A9HE41"/>
<dbReference type="STRING" id="272568.GDI1238"/>
<dbReference type="KEGG" id="gdi:GDI1238"/>
<dbReference type="KEGG" id="gdj:Gdia_1949"/>
<dbReference type="eggNOG" id="COG3128">
    <property type="taxonomic scope" value="Bacteria"/>
</dbReference>
<dbReference type="HOGENOM" id="CLU_106663_0_0_5"/>
<dbReference type="OrthoDB" id="9812472at2"/>
<dbReference type="Proteomes" id="UP000001176">
    <property type="component" value="Chromosome"/>
</dbReference>
<dbReference type="GO" id="GO:0016706">
    <property type="term" value="F:2-oxoglutarate-dependent dioxygenase activity"/>
    <property type="evidence" value="ECO:0007669"/>
    <property type="project" value="UniProtKB-UniRule"/>
</dbReference>
<dbReference type="GO" id="GO:0005506">
    <property type="term" value="F:iron ion binding"/>
    <property type="evidence" value="ECO:0007669"/>
    <property type="project" value="UniProtKB-UniRule"/>
</dbReference>
<dbReference type="GO" id="GO:0031418">
    <property type="term" value="F:L-ascorbic acid binding"/>
    <property type="evidence" value="ECO:0007669"/>
    <property type="project" value="UniProtKB-KW"/>
</dbReference>
<dbReference type="GO" id="GO:0006974">
    <property type="term" value="P:DNA damage response"/>
    <property type="evidence" value="ECO:0007669"/>
    <property type="project" value="TreeGrafter"/>
</dbReference>
<dbReference type="GO" id="GO:0006879">
    <property type="term" value="P:intracellular iron ion homeostasis"/>
    <property type="evidence" value="ECO:0007669"/>
    <property type="project" value="TreeGrafter"/>
</dbReference>
<dbReference type="Gene3D" id="2.60.120.620">
    <property type="entry name" value="q2cbj1_9rhob like domain"/>
    <property type="match status" value="1"/>
</dbReference>
<dbReference type="Gene3D" id="4.10.860.20">
    <property type="entry name" value="Rabenosyn, Rab binding domain"/>
    <property type="match status" value="1"/>
</dbReference>
<dbReference type="HAMAP" id="MF_00657">
    <property type="entry name" value="Hydroxyl_YbiX"/>
    <property type="match status" value="1"/>
</dbReference>
<dbReference type="InterPro" id="IPR005123">
    <property type="entry name" value="Oxoglu/Fe-dep_dioxygenase_dom"/>
</dbReference>
<dbReference type="InterPro" id="IPR041097">
    <property type="entry name" value="PKHD_C"/>
</dbReference>
<dbReference type="InterPro" id="IPR023550">
    <property type="entry name" value="PKHD_hydroxylase"/>
</dbReference>
<dbReference type="InterPro" id="IPR006620">
    <property type="entry name" value="Pro_4_hyd_alph"/>
</dbReference>
<dbReference type="InterPro" id="IPR044862">
    <property type="entry name" value="Pro_4_hyd_alph_FE2OG_OXY"/>
</dbReference>
<dbReference type="NCBIfam" id="NF003974">
    <property type="entry name" value="PRK05467.1-3"/>
    <property type="match status" value="1"/>
</dbReference>
<dbReference type="NCBIfam" id="NF003975">
    <property type="entry name" value="PRK05467.1-4"/>
    <property type="match status" value="1"/>
</dbReference>
<dbReference type="PANTHER" id="PTHR41536">
    <property type="entry name" value="PKHD-TYPE HYDROXYLASE YBIX"/>
    <property type="match status" value="1"/>
</dbReference>
<dbReference type="PANTHER" id="PTHR41536:SF1">
    <property type="entry name" value="PKHD-TYPE HYDROXYLASE YBIX"/>
    <property type="match status" value="1"/>
</dbReference>
<dbReference type="Pfam" id="PF13640">
    <property type="entry name" value="2OG-FeII_Oxy_3"/>
    <property type="match status" value="1"/>
</dbReference>
<dbReference type="Pfam" id="PF18331">
    <property type="entry name" value="PKHD_C"/>
    <property type="match status" value="1"/>
</dbReference>
<dbReference type="SMART" id="SM00702">
    <property type="entry name" value="P4Hc"/>
    <property type="match status" value="1"/>
</dbReference>
<dbReference type="PROSITE" id="PS51471">
    <property type="entry name" value="FE2OG_OXY"/>
    <property type="match status" value="1"/>
</dbReference>
<evidence type="ECO:0000255" key="1">
    <source>
        <dbReference type="HAMAP-Rule" id="MF_00657"/>
    </source>
</evidence>
<reference key="1">
    <citation type="journal article" date="2009" name="BMC Genomics">
        <title>Complete genome sequence of the sugarcane nitrogen-fixing endophyte Gluconacetobacter diazotrophicus Pal5.</title>
        <authorList>
            <person name="Bertalan M."/>
            <person name="Albano R."/>
            <person name="de Padua V."/>
            <person name="Rouws L."/>
            <person name="Rojas C."/>
            <person name="Hemerly A."/>
            <person name="Teixeira K."/>
            <person name="Schwab S."/>
            <person name="Araujo J."/>
            <person name="Oliveira A."/>
            <person name="Franca L."/>
            <person name="Magalhaes V."/>
            <person name="Alqueres S."/>
            <person name="Cardoso A."/>
            <person name="Almeida W."/>
            <person name="Loureiro M.M."/>
            <person name="Nogueira E."/>
            <person name="Cidade D."/>
            <person name="Oliveira D."/>
            <person name="Simao T."/>
            <person name="Macedo J."/>
            <person name="Valadao A."/>
            <person name="Dreschsel M."/>
            <person name="Freitas F."/>
            <person name="Vidal M."/>
            <person name="Guedes H."/>
            <person name="Rodrigues E."/>
            <person name="Meneses C."/>
            <person name="Brioso P."/>
            <person name="Pozzer L."/>
            <person name="Figueiredo D."/>
            <person name="Montano H."/>
            <person name="Junior J."/>
            <person name="de Souza Filho G."/>
            <person name="Martin Quintana Flores V."/>
            <person name="Ferreira B."/>
            <person name="Branco A."/>
            <person name="Gonzalez P."/>
            <person name="Guillobel H."/>
            <person name="Lemos M."/>
            <person name="Seibel L."/>
            <person name="Macedo J."/>
            <person name="Alves-Ferreira M."/>
            <person name="Sachetto-Martins G."/>
            <person name="Coelho A."/>
            <person name="Santos E."/>
            <person name="Amaral G."/>
            <person name="Neves A."/>
            <person name="Pacheco A.B."/>
            <person name="Carvalho D."/>
            <person name="Lery L."/>
            <person name="Bisch P."/>
            <person name="Rossle S.C."/>
            <person name="Urmenyi T."/>
            <person name="Rael Pereira A."/>
            <person name="Silva R."/>
            <person name="Rondinelli E."/>
            <person name="von Kruger W."/>
            <person name="Martins O."/>
            <person name="Baldani J.I."/>
            <person name="Ferreira P.C."/>
        </authorList>
    </citation>
    <scope>NUCLEOTIDE SEQUENCE [LARGE SCALE GENOMIC DNA]</scope>
    <source>
        <strain>ATCC 49037 / DSM 5601 / CCUG 37298 / CIP 103539 / LMG 7603 / PAl5</strain>
    </source>
</reference>
<reference key="2">
    <citation type="journal article" date="2010" name="Stand. Genomic Sci.">
        <title>Two genome sequences of the same bacterial strain, Gluconacetobacter diazotrophicus PAl 5, suggest a new standard in genome sequence submission.</title>
        <authorList>
            <person name="Giongo A."/>
            <person name="Tyler H.L."/>
            <person name="Zipperer U.N."/>
            <person name="Triplett E.W."/>
        </authorList>
    </citation>
    <scope>NUCLEOTIDE SEQUENCE [LARGE SCALE GENOMIC DNA]</scope>
    <source>
        <strain>ATCC 49037 / DSM 5601 / CCUG 37298 / CIP 103539 / LMG 7603 / PAl5</strain>
    </source>
</reference>
<feature type="chain" id="PRO_1000082790" description="PKHD-type hydroxylase GDI1238/Gdia_1949">
    <location>
        <begin position="1"/>
        <end position="227"/>
    </location>
</feature>
<feature type="domain" description="Fe2OG dioxygenase" evidence="1">
    <location>
        <begin position="78"/>
        <end position="178"/>
    </location>
</feature>
<feature type="binding site" evidence="1">
    <location>
        <position position="96"/>
    </location>
    <ligand>
        <name>Fe cation</name>
        <dbReference type="ChEBI" id="CHEBI:24875"/>
    </ligand>
</feature>
<feature type="binding site" evidence="1">
    <location>
        <position position="98"/>
    </location>
    <ligand>
        <name>Fe cation</name>
        <dbReference type="ChEBI" id="CHEBI:24875"/>
    </ligand>
</feature>
<feature type="binding site" evidence="1">
    <location>
        <position position="159"/>
    </location>
    <ligand>
        <name>Fe cation</name>
        <dbReference type="ChEBI" id="CHEBI:24875"/>
    </ligand>
</feature>
<feature type="binding site" evidence="1">
    <location>
        <position position="169"/>
    </location>
    <ligand>
        <name>2-oxoglutarate</name>
        <dbReference type="ChEBI" id="CHEBI:16810"/>
    </ligand>
</feature>
<keyword id="KW-0223">Dioxygenase</keyword>
<keyword id="KW-0408">Iron</keyword>
<keyword id="KW-0479">Metal-binding</keyword>
<keyword id="KW-0560">Oxidoreductase</keyword>
<keyword id="KW-1185">Reference proteome</keyword>
<keyword id="KW-0847">Vitamin C</keyword>
<organism>
    <name type="scientific">Gluconacetobacter diazotrophicus (strain ATCC 49037 / DSM 5601 / CCUG 37298 / CIP 103539 / LMG 7603 / PAl5)</name>
    <dbReference type="NCBI Taxonomy" id="272568"/>
    <lineage>
        <taxon>Bacteria</taxon>
        <taxon>Pseudomonadati</taxon>
        <taxon>Pseudomonadota</taxon>
        <taxon>Alphaproteobacteria</taxon>
        <taxon>Acetobacterales</taxon>
        <taxon>Acetobacteraceae</taxon>
        <taxon>Gluconacetobacter</taxon>
    </lineage>
</organism>
<protein>
    <recommendedName>
        <fullName evidence="1">PKHD-type hydroxylase GDI1238/Gdia_1949</fullName>
        <ecNumber evidence="1">1.14.11.-</ecNumber>
    </recommendedName>
</protein>
<gene>
    <name type="ordered locus">GDI1238</name>
    <name type="ordered locus">Gdia_1949</name>
</gene>
<name>Y1238_GLUDA</name>
<sequence length="227" mass="25507">MLIHIPSVLTVEEVAHCRQIMAGAEWVDGRVTAGPQSAMVKNNLQIPLSSDAHREMRDIVLRALGRNPTYNSAALPLRVVPPLFNRYDAGMSFAAHVDNAIRPIHETGARVRTDLSSTLFLSEPDEYDGGELVLHEPGSTQELKLPAGDMVLYPTTALHSVNEVTRGSRLASFFWTQSMIADEARRRIMFELDRTIMDLRTRLPDDDLAVLNLTNCYHNLMRQWCVL</sequence>
<accession>A9HE41</accession>
<accession>B5ZCQ1</accession>